<protein>
    <recommendedName>
        <fullName>Protein HflK</fullName>
    </recommendedName>
</protein>
<sequence length="417" mass="48545">MEKNMAWNEPSDSEKDKDPWNKKDKKLKNFDENKKSKLYLFLEIECLVNFLKRKKKIFFSESGSFKYFKNLITMIIFTTIIFLIGSGFYFIQESEYGVVTCFGKFSYLANPGLHWKPILIQKVIPIDVSTVREINTSGTILTYSEHFVQVNMTVQYRIVDPKKYLFSVTNPDNCLRQSINSALRSVISRSNIDIFLKNEFSLLAKNDIKVNIQKIIKPYHMGIVISDINFRTLYLPQAVKLAFEDIFSAIESKKQSLNEARIYSNEIKSQAFYNAKKILIEAKSDRLRTILNAQGIIFKFLKILPIYKSSKKITTIQLYFDCMEKIFSHTRKVLTNSDNNFFLFSLNDLFLKNNYNSLTQSHSNSNKHSSMLNTVSSSHVKSIDHVNSNNLLISSNNIINQRKLNSFRKDYLRIGRE</sequence>
<name>HFLK_BUCBP</name>
<comment type="function">
    <text evidence="1">HflC and HflK could encode or regulate a protease.</text>
</comment>
<comment type="subunit">
    <text evidence="1">HflC and HflK may interact to form a multimeric complex.</text>
</comment>
<comment type="subcellular location">
    <subcellularLocation>
        <location evidence="4">Membrane</location>
        <topology evidence="4">Single-pass membrane protein</topology>
    </subcellularLocation>
</comment>
<comment type="similarity">
    <text evidence="4">Belongs to the band 7/mec-2 family. HflK subfamily.</text>
</comment>
<keyword id="KW-0472">Membrane</keyword>
<keyword id="KW-1185">Reference proteome</keyword>
<keyword id="KW-0812">Transmembrane</keyword>
<keyword id="KW-1133">Transmembrane helix</keyword>
<feature type="chain" id="PRO_0000094084" description="Protein HflK">
    <location>
        <begin position="1"/>
        <end position="417"/>
    </location>
</feature>
<feature type="transmembrane region" description="Helical" evidence="2">
    <location>
        <begin position="71"/>
        <end position="91"/>
    </location>
</feature>
<feature type="region of interest" description="Disordered" evidence="3">
    <location>
        <begin position="1"/>
        <end position="24"/>
    </location>
</feature>
<feature type="compositionally biased region" description="Basic and acidic residues" evidence="3">
    <location>
        <begin position="12"/>
        <end position="24"/>
    </location>
</feature>
<gene>
    <name type="primary">hflK</name>
    <name type="ordered locus">bbp_513</name>
</gene>
<organism>
    <name type="scientific">Buchnera aphidicola subsp. Baizongia pistaciae (strain Bp)</name>
    <dbReference type="NCBI Taxonomy" id="224915"/>
    <lineage>
        <taxon>Bacteria</taxon>
        <taxon>Pseudomonadati</taxon>
        <taxon>Pseudomonadota</taxon>
        <taxon>Gammaproteobacteria</taxon>
        <taxon>Enterobacterales</taxon>
        <taxon>Erwiniaceae</taxon>
        <taxon>Buchnera</taxon>
    </lineage>
</organism>
<reference key="1">
    <citation type="journal article" date="2003" name="Proc. Natl. Acad. Sci. U.S.A.">
        <title>Reductive genome evolution in Buchnera aphidicola.</title>
        <authorList>
            <person name="van Ham R.C.H.J."/>
            <person name="Kamerbeek J."/>
            <person name="Palacios C."/>
            <person name="Rausell C."/>
            <person name="Abascal F."/>
            <person name="Bastolla U."/>
            <person name="Fernandez J.M."/>
            <person name="Jimenez L."/>
            <person name="Postigo M."/>
            <person name="Silva F.J."/>
            <person name="Tamames J."/>
            <person name="Viguera E."/>
            <person name="Latorre A."/>
            <person name="Valencia A."/>
            <person name="Moran F."/>
            <person name="Moya A."/>
        </authorList>
    </citation>
    <scope>NUCLEOTIDE SEQUENCE [LARGE SCALE GENOMIC DNA]</scope>
    <source>
        <strain>Bp</strain>
    </source>
</reference>
<dbReference type="EMBL" id="AE016826">
    <property type="protein sequence ID" value="AAO27216.1"/>
    <property type="molecule type" value="Genomic_DNA"/>
</dbReference>
<dbReference type="RefSeq" id="WP_011091617.1">
    <property type="nucleotide sequence ID" value="NC_004545.1"/>
</dbReference>
<dbReference type="SMR" id="Q89A39"/>
<dbReference type="STRING" id="224915.bbp_513"/>
<dbReference type="KEGG" id="bab:bbp_513"/>
<dbReference type="eggNOG" id="COG0330">
    <property type="taxonomic scope" value="Bacteria"/>
</dbReference>
<dbReference type="HOGENOM" id="CLU_039173_1_1_6"/>
<dbReference type="OrthoDB" id="9779595at2"/>
<dbReference type="Proteomes" id="UP000000601">
    <property type="component" value="Chromosome"/>
</dbReference>
<dbReference type="GO" id="GO:0016020">
    <property type="term" value="C:membrane"/>
    <property type="evidence" value="ECO:0007669"/>
    <property type="project" value="UniProtKB-SubCell"/>
</dbReference>
<dbReference type="CDD" id="cd03404">
    <property type="entry name" value="SPFH_HflK"/>
    <property type="match status" value="1"/>
</dbReference>
<dbReference type="Gene3D" id="3.30.479.30">
    <property type="entry name" value="Band 7 domain"/>
    <property type="match status" value="1"/>
</dbReference>
<dbReference type="InterPro" id="IPR050710">
    <property type="entry name" value="Band7/mec-2_domain"/>
</dbReference>
<dbReference type="InterPro" id="IPR001107">
    <property type="entry name" value="Band_7"/>
</dbReference>
<dbReference type="InterPro" id="IPR036013">
    <property type="entry name" value="Band_7/SPFH_dom_sf"/>
</dbReference>
<dbReference type="InterPro" id="IPR010201">
    <property type="entry name" value="HflK"/>
</dbReference>
<dbReference type="NCBIfam" id="TIGR01933">
    <property type="entry name" value="hflK"/>
    <property type="match status" value="1"/>
</dbReference>
<dbReference type="PANTHER" id="PTHR43327:SF2">
    <property type="entry name" value="MODULATOR OF FTSH PROTEASE HFLK"/>
    <property type="match status" value="1"/>
</dbReference>
<dbReference type="PANTHER" id="PTHR43327">
    <property type="entry name" value="STOMATIN-LIKE PROTEIN 2, MITOCHONDRIAL"/>
    <property type="match status" value="1"/>
</dbReference>
<dbReference type="Pfam" id="PF01145">
    <property type="entry name" value="Band_7"/>
    <property type="match status" value="1"/>
</dbReference>
<dbReference type="SMART" id="SM00244">
    <property type="entry name" value="PHB"/>
    <property type="match status" value="1"/>
</dbReference>
<dbReference type="SUPFAM" id="SSF117892">
    <property type="entry name" value="Band 7/SPFH domain"/>
    <property type="match status" value="1"/>
</dbReference>
<proteinExistence type="inferred from homology"/>
<evidence type="ECO:0000250" key="1"/>
<evidence type="ECO:0000255" key="2"/>
<evidence type="ECO:0000256" key="3">
    <source>
        <dbReference type="SAM" id="MobiDB-lite"/>
    </source>
</evidence>
<evidence type="ECO:0000305" key="4"/>
<accession>Q89A39</accession>